<comment type="subcellular location">
    <subcellularLocation>
        <location evidence="1">Mitochondrion</location>
    </subcellularLocation>
</comment>
<comment type="similarity">
    <text evidence="2">Belongs to the BolA/IbaG family.</text>
</comment>
<protein>
    <recommendedName>
        <fullName>Uncharacterized bolA-like protein C4B3.11c</fullName>
    </recommendedName>
</protein>
<organism>
    <name type="scientific">Schizosaccharomyces pombe (strain 972 / ATCC 24843)</name>
    <name type="common">Fission yeast</name>
    <dbReference type="NCBI Taxonomy" id="284812"/>
    <lineage>
        <taxon>Eukaryota</taxon>
        <taxon>Fungi</taxon>
        <taxon>Dikarya</taxon>
        <taxon>Ascomycota</taxon>
        <taxon>Taphrinomycotina</taxon>
        <taxon>Schizosaccharomycetes</taxon>
        <taxon>Schizosaccharomycetales</taxon>
        <taxon>Schizosaccharomycetaceae</taxon>
        <taxon>Schizosaccharomyces</taxon>
    </lineage>
</organism>
<sequence length="116" mass="12743">MKLAIGRLLSPLFLKNPQKPLIITKRFYSTPGERRIKDILTEKLSPSSLRVIDVSGGCGSMYQVAIKSKAFQGKNTLAQHRLVNSILKEEIRNMHGLNLSTEVEDDISAGGSTTSS</sequence>
<name>YJ2B_SCHPO</name>
<accession>Q9USK1</accession>
<gene>
    <name type="ORF">SPCC4B3.11c</name>
</gene>
<feature type="chain" id="PRO_0000316213" description="Uncharacterized bolA-like protein C4B3.11c">
    <location>
        <begin position="1"/>
        <end position="116"/>
    </location>
</feature>
<reference key="1">
    <citation type="journal article" date="2002" name="Nature">
        <title>The genome sequence of Schizosaccharomyces pombe.</title>
        <authorList>
            <person name="Wood V."/>
            <person name="Gwilliam R."/>
            <person name="Rajandream M.A."/>
            <person name="Lyne M.H."/>
            <person name="Lyne R."/>
            <person name="Stewart A."/>
            <person name="Sgouros J.G."/>
            <person name="Peat N."/>
            <person name="Hayles J."/>
            <person name="Baker S.G."/>
            <person name="Basham D."/>
            <person name="Bowman S."/>
            <person name="Brooks K."/>
            <person name="Brown D."/>
            <person name="Brown S."/>
            <person name="Chillingworth T."/>
            <person name="Churcher C.M."/>
            <person name="Collins M."/>
            <person name="Connor R."/>
            <person name="Cronin A."/>
            <person name="Davis P."/>
            <person name="Feltwell T."/>
            <person name="Fraser A."/>
            <person name="Gentles S."/>
            <person name="Goble A."/>
            <person name="Hamlin N."/>
            <person name="Harris D.E."/>
            <person name="Hidalgo J."/>
            <person name="Hodgson G."/>
            <person name="Holroyd S."/>
            <person name="Hornsby T."/>
            <person name="Howarth S."/>
            <person name="Huckle E.J."/>
            <person name="Hunt S."/>
            <person name="Jagels K."/>
            <person name="James K.D."/>
            <person name="Jones L."/>
            <person name="Jones M."/>
            <person name="Leather S."/>
            <person name="McDonald S."/>
            <person name="McLean J."/>
            <person name="Mooney P."/>
            <person name="Moule S."/>
            <person name="Mungall K.L."/>
            <person name="Murphy L.D."/>
            <person name="Niblett D."/>
            <person name="Odell C."/>
            <person name="Oliver K."/>
            <person name="O'Neil S."/>
            <person name="Pearson D."/>
            <person name="Quail M.A."/>
            <person name="Rabbinowitsch E."/>
            <person name="Rutherford K.M."/>
            <person name="Rutter S."/>
            <person name="Saunders D."/>
            <person name="Seeger K."/>
            <person name="Sharp S."/>
            <person name="Skelton J."/>
            <person name="Simmonds M.N."/>
            <person name="Squares R."/>
            <person name="Squares S."/>
            <person name="Stevens K."/>
            <person name="Taylor K."/>
            <person name="Taylor R.G."/>
            <person name="Tivey A."/>
            <person name="Walsh S.V."/>
            <person name="Warren T."/>
            <person name="Whitehead S."/>
            <person name="Woodward J.R."/>
            <person name="Volckaert G."/>
            <person name="Aert R."/>
            <person name="Robben J."/>
            <person name="Grymonprez B."/>
            <person name="Weltjens I."/>
            <person name="Vanstreels E."/>
            <person name="Rieger M."/>
            <person name="Schaefer M."/>
            <person name="Mueller-Auer S."/>
            <person name="Gabel C."/>
            <person name="Fuchs M."/>
            <person name="Duesterhoeft A."/>
            <person name="Fritzc C."/>
            <person name="Holzer E."/>
            <person name="Moestl D."/>
            <person name="Hilbert H."/>
            <person name="Borzym K."/>
            <person name="Langer I."/>
            <person name="Beck A."/>
            <person name="Lehrach H."/>
            <person name="Reinhardt R."/>
            <person name="Pohl T.M."/>
            <person name="Eger P."/>
            <person name="Zimmermann W."/>
            <person name="Wedler H."/>
            <person name="Wambutt R."/>
            <person name="Purnelle B."/>
            <person name="Goffeau A."/>
            <person name="Cadieu E."/>
            <person name="Dreano S."/>
            <person name="Gloux S."/>
            <person name="Lelaure V."/>
            <person name="Mottier S."/>
            <person name="Galibert F."/>
            <person name="Aves S.J."/>
            <person name="Xiang Z."/>
            <person name="Hunt C."/>
            <person name="Moore K."/>
            <person name="Hurst S.M."/>
            <person name="Lucas M."/>
            <person name="Rochet M."/>
            <person name="Gaillardin C."/>
            <person name="Tallada V.A."/>
            <person name="Garzon A."/>
            <person name="Thode G."/>
            <person name="Daga R.R."/>
            <person name="Cruzado L."/>
            <person name="Jimenez J."/>
            <person name="Sanchez M."/>
            <person name="del Rey F."/>
            <person name="Benito J."/>
            <person name="Dominguez A."/>
            <person name="Revuelta J.L."/>
            <person name="Moreno S."/>
            <person name="Armstrong J."/>
            <person name="Forsburg S.L."/>
            <person name="Cerutti L."/>
            <person name="Lowe T."/>
            <person name="McCombie W.R."/>
            <person name="Paulsen I."/>
            <person name="Potashkin J."/>
            <person name="Shpakovski G.V."/>
            <person name="Ussery D."/>
            <person name="Barrell B.G."/>
            <person name="Nurse P."/>
        </authorList>
    </citation>
    <scope>NUCLEOTIDE SEQUENCE [LARGE SCALE GENOMIC DNA]</scope>
    <source>
        <strain>972 / ATCC 24843</strain>
    </source>
</reference>
<reference key="2">
    <citation type="journal article" date="2006" name="Nat. Biotechnol.">
        <title>ORFeome cloning and global analysis of protein localization in the fission yeast Schizosaccharomyces pombe.</title>
        <authorList>
            <person name="Matsuyama A."/>
            <person name="Arai R."/>
            <person name="Yashiroda Y."/>
            <person name="Shirai A."/>
            <person name="Kamata A."/>
            <person name="Sekido S."/>
            <person name="Kobayashi Y."/>
            <person name="Hashimoto A."/>
            <person name="Hamamoto M."/>
            <person name="Hiraoka Y."/>
            <person name="Horinouchi S."/>
            <person name="Yoshida M."/>
        </authorList>
    </citation>
    <scope>SUBCELLULAR LOCATION [LARGE SCALE ANALYSIS]</scope>
</reference>
<proteinExistence type="inferred from homology"/>
<dbReference type="EMBL" id="CU329672">
    <property type="protein sequence ID" value="CAB60685.1"/>
    <property type="molecule type" value="Genomic_DNA"/>
</dbReference>
<dbReference type="PIR" id="T50437">
    <property type="entry name" value="T50437"/>
</dbReference>
<dbReference type="SMR" id="Q9USK1"/>
<dbReference type="BioGRID" id="276114">
    <property type="interactions" value="2"/>
</dbReference>
<dbReference type="FunCoup" id="Q9USK1">
    <property type="interactions" value="94"/>
</dbReference>
<dbReference type="STRING" id="284812.Q9USK1"/>
<dbReference type="PaxDb" id="4896-SPCC4B3.11c.1"/>
<dbReference type="EnsemblFungi" id="SPCC4B3.11c.1">
    <property type="protein sequence ID" value="SPCC4B3.11c.1:pep"/>
    <property type="gene ID" value="SPCC4B3.11c"/>
</dbReference>
<dbReference type="KEGG" id="spo:2539553"/>
<dbReference type="PomBase" id="SPCC4B3.11c"/>
<dbReference type="VEuPathDB" id="FungiDB:SPCC4B3.11c"/>
<dbReference type="eggNOG" id="KOG3348">
    <property type="taxonomic scope" value="Eukaryota"/>
</dbReference>
<dbReference type="HOGENOM" id="CLU_109462_0_1_1"/>
<dbReference type="InParanoid" id="Q9USK1"/>
<dbReference type="OMA" id="RVWNGPN"/>
<dbReference type="PhylomeDB" id="Q9USK1"/>
<dbReference type="PRO" id="PR:Q9USK1"/>
<dbReference type="Proteomes" id="UP000002485">
    <property type="component" value="Chromosome III"/>
</dbReference>
<dbReference type="GO" id="GO:0005759">
    <property type="term" value="C:mitochondrial matrix"/>
    <property type="evidence" value="ECO:0000318"/>
    <property type="project" value="GO_Central"/>
</dbReference>
<dbReference type="GO" id="GO:0005739">
    <property type="term" value="C:mitochondrion"/>
    <property type="evidence" value="ECO:0007005"/>
    <property type="project" value="PomBase"/>
</dbReference>
<dbReference type="Gene3D" id="3.30.300.90">
    <property type="entry name" value="BolA-like"/>
    <property type="match status" value="1"/>
</dbReference>
<dbReference type="InterPro" id="IPR002634">
    <property type="entry name" value="BolA"/>
</dbReference>
<dbReference type="InterPro" id="IPR036065">
    <property type="entry name" value="BolA-like_sf"/>
</dbReference>
<dbReference type="InterPro" id="IPR052275">
    <property type="entry name" value="Mt_Fe-S_assembly_factor"/>
</dbReference>
<dbReference type="PANTHER" id="PTHR46188">
    <property type="entry name" value="BOLA-LIKE PROTEIN 3"/>
    <property type="match status" value="1"/>
</dbReference>
<dbReference type="PANTHER" id="PTHR46188:SF1">
    <property type="entry name" value="BOLA-LIKE PROTEIN 3"/>
    <property type="match status" value="1"/>
</dbReference>
<dbReference type="Pfam" id="PF01722">
    <property type="entry name" value="BolA"/>
    <property type="match status" value="1"/>
</dbReference>
<dbReference type="SUPFAM" id="SSF82657">
    <property type="entry name" value="BolA-like"/>
    <property type="match status" value="1"/>
</dbReference>
<keyword id="KW-0496">Mitochondrion</keyword>
<keyword id="KW-1185">Reference proteome</keyword>
<evidence type="ECO:0000269" key="1">
    <source>
    </source>
</evidence>
<evidence type="ECO:0000305" key="2"/>